<comment type="function">
    <text evidence="1">Catalyzes the transfer of a dimethylallyl group onto the adenine at position 37 in tRNAs that read codons beginning with uridine, leading to the formation of N6-(dimethylallyl)adenosine (i(6)A).</text>
</comment>
<comment type="catalytic activity">
    <reaction evidence="1">
        <text>adenosine(37) in tRNA + dimethylallyl diphosphate = N(6)-dimethylallyladenosine(37) in tRNA + diphosphate</text>
        <dbReference type="Rhea" id="RHEA:26482"/>
        <dbReference type="Rhea" id="RHEA-COMP:10162"/>
        <dbReference type="Rhea" id="RHEA-COMP:10375"/>
        <dbReference type="ChEBI" id="CHEBI:33019"/>
        <dbReference type="ChEBI" id="CHEBI:57623"/>
        <dbReference type="ChEBI" id="CHEBI:74411"/>
        <dbReference type="ChEBI" id="CHEBI:74415"/>
        <dbReference type="EC" id="2.5.1.75"/>
    </reaction>
</comment>
<comment type="cofactor">
    <cofactor evidence="1">
        <name>Mg(2+)</name>
        <dbReference type="ChEBI" id="CHEBI:18420"/>
    </cofactor>
</comment>
<comment type="subunit">
    <text evidence="1">Monomer.</text>
</comment>
<comment type="similarity">
    <text evidence="1">Belongs to the IPP transferase family.</text>
</comment>
<reference key="1">
    <citation type="journal article" date="2003" name="Genome Res.">
        <title>Genome sequence of an M3 strain of Streptococcus pyogenes reveals a large-scale genomic rearrangement in invasive strains and new insights into phage evolution.</title>
        <authorList>
            <person name="Nakagawa I."/>
            <person name="Kurokawa K."/>
            <person name="Yamashita A."/>
            <person name="Nakata M."/>
            <person name="Tomiyasu Y."/>
            <person name="Okahashi N."/>
            <person name="Kawabata S."/>
            <person name="Yamazaki K."/>
            <person name="Shiba T."/>
            <person name="Yasunaga T."/>
            <person name="Hayashi H."/>
            <person name="Hattori M."/>
            <person name="Hamada S."/>
        </authorList>
    </citation>
    <scope>NUCLEOTIDE SEQUENCE [LARGE SCALE GENOMIC DNA]</scope>
    <source>
        <strain>SSI-1</strain>
    </source>
</reference>
<gene>
    <name evidence="1" type="primary">miaA</name>
    <name type="ordered locus">SPs1218</name>
</gene>
<sequence>MTKIKIVVIVGPTAVGKTALGISLAKAFNGEIISGDSQQVYRQLDIGTAKATQEEQEAAVHHLIDIREVTESYSAYDFVQDAQKAISDIVSRGKLPIIVGGTGLYLQSLLEGYHLGGQVDQEAVKAYRNELEQLDDHDLYERLQVNNITIEQVNRRRAIRALELAQFADELENAETAYEPLIIGLNDDRQVIYDRINQRVDRMLENGLLEEAKWLYEHYPTVQASRGIGYKELFPYFVGEMTLAEASDQLKQNTRRFAKRQLTWFRNRMAVSFTAITAPDYPQVVHDRVRDFLGQKEKS</sequence>
<organism>
    <name type="scientific">Streptococcus pyogenes serotype M3 (strain SSI-1)</name>
    <dbReference type="NCBI Taxonomy" id="193567"/>
    <lineage>
        <taxon>Bacteria</taxon>
        <taxon>Bacillati</taxon>
        <taxon>Bacillota</taxon>
        <taxon>Bacilli</taxon>
        <taxon>Lactobacillales</taxon>
        <taxon>Streptococcaceae</taxon>
        <taxon>Streptococcus</taxon>
    </lineage>
</organism>
<accession>P0DC33</accession>
<accession>P65357</accession>
<accession>Q8P1A9</accession>
<name>MIAA_STRPQ</name>
<feature type="chain" id="PRO_0000411404" description="tRNA dimethylallyltransferase">
    <location>
        <begin position="1"/>
        <end position="299"/>
    </location>
</feature>
<feature type="region of interest" description="Interaction with substrate tRNA" evidence="1">
    <location>
        <begin position="36"/>
        <end position="39"/>
    </location>
</feature>
<feature type="binding site" evidence="1">
    <location>
        <begin position="11"/>
        <end position="18"/>
    </location>
    <ligand>
        <name>ATP</name>
        <dbReference type="ChEBI" id="CHEBI:30616"/>
    </ligand>
</feature>
<feature type="binding site" evidence="1">
    <location>
        <begin position="13"/>
        <end position="18"/>
    </location>
    <ligand>
        <name>substrate</name>
    </ligand>
</feature>
<feature type="site" description="Interaction with substrate tRNA" evidence="1">
    <location>
        <position position="102"/>
    </location>
</feature>
<feature type="site" description="Interaction with substrate tRNA" evidence="1">
    <location>
        <position position="128"/>
    </location>
</feature>
<evidence type="ECO:0000255" key="1">
    <source>
        <dbReference type="HAMAP-Rule" id="MF_00185"/>
    </source>
</evidence>
<dbReference type="EC" id="2.5.1.75" evidence="1"/>
<dbReference type="EMBL" id="BA000034">
    <property type="protein sequence ID" value="BAC64313.1"/>
    <property type="molecule type" value="Genomic_DNA"/>
</dbReference>
<dbReference type="RefSeq" id="WP_002984897.1">
    <property type="nucleotide sequence ID" value="NC_004606.1"/>
</dbReference>
<dbReference type="SMR" id="P0DC33"/>
<dbReference type="GeneID" id="69900977"/>
<dbReference type="KEGG" id="sps:SPs1218"/>
<dbReference type="HOGENOM" id="CLU_032616_0_1_9"/>
<dbReference type="GO" id="GO:0005524">
    <property type="term" value="F:ATP binding"/>
    <property type="evidence" value="ECO:0007669"/>
    <property type="project" value="UniProtKB-UniRule"/>
</dbReference>
<dbReference type="GO" id="GO:0052381">
    <property type="term" value="F:tRNA dimethylallyltransferase activity"/>
    <property type="evidence" value="ECO:0007669"/>
    <property type="project" value="UniProtKB-UniRule"/>
</dbReference>
<dbReference type="GO" id="GO:0006400">
    <property type="term" value="P:tRNA modification"/>
    <property type="evidence" value="ECO:0007669"/>
    <property type="project" value="TreeGrafter"/>
</dbReference>
<dbReference type="Gene3D" id="3.40.50.300">
    <property type="entry name" value="P-loop containing nucleotide triphosphate hydrolases"/>
    <property type="match status" value="1"/>
</dbReference>
<dbReference type="HAMAP" id="MF_00185">
    <property type="entry name" value="IPP_trans"/>
    <property type="match status" value="1"/>
</dbReference>
<dbReference type="InterPro" id="IPR039657">
    <property type="entry name" value="Dimethylallyltransferase"/>
</dbReference>
<dbReference type="InterPro" id="IPR018022">
    <property type="entry name" value="IPT"/>
</dbReference>
<dbReference type="InterPro" id="IPR027417">
    <property type="entry name" value="P-loop_NTPase"/>
</dbReference>
<dbReference type="NCBIfam" id="TIGR00174">
    <property type="entry name" value="miaA"/>
    <property type="match status" value="1"/>
</dbReference>
<dbReference type="PANTHER" id="PTHR11088">
    <property type="entry name" value="TRNA DIMETHYLALLYLTRANSFERASE"/>
    <property type="match status" value="1"/>
</dbReference>
<dbReference type="PANTHER" id="PTHR11088:SF60">
    <property type="entry name" value="TRNA DIMETHYLALLYLTRANSFERASE"/>
    <property type="match status" value="1"/>
</dbReference>
<dbReference type="Pfam" id="PF01715">
    <property type="entry name" value="IPPT"/>
    <property type="match status" value="1"/>
</dbReference>
<dbReference type="SUPFAM" id="SSF52540">
    <property type="entry name" value="P-loop containing nucleoside triphosphate hydrolases"/>
    <property type="match status" value="1"/>
</dbReference>
<proteinExistence type="inferred from homology"/>
<protein>
    <recommendedName>
        <fullName evidence="1">tRNA dimethylallyltransferase</fullName>
        <ecNumber evidence="1">2.5.1.75</ecNumber>
    </recommendedName>
    <alternativeName>
        <fullName evidence="1">Dimethylallyl diphosphate:tRNA dimethylallyltransferase</fullName>
        <shortName evidence="1">DMAPP:tRNA dimethylallyltransferase</shortName>
        <shortName evidence="1">DMATase</shortName>
    </alternativeName>
    <alternativeName>
        <fullName evidence="1">Isopentenyl-diphosphate:tRNA isopentenyltransferase</fullName>
        <shortName evidence="1">IPP transferase</shortName>
        <shortName evidence="1">IPPT</shortName>
        <shortName evidence="1">IPTase</shortName>
    </alternativeName>
</protein>
<keyword id="KW-0067">ATP-binding</keyword>
<keyword id="KW-0460">Magnesium</keyword>
<keyword id="KW-0547">Nucleotide-binding</keyword>
<keyword id="KW-0808">Transferase</keyword>
<keyword id="KW-0819">tRNA processing</keyword>